<dbReference type="EC" id="3.6.4.10" evidence="1"/>
<dbReference type="EMBL" id="Y08867">
    <property type="protein sequence ID" value="CAA70090.1"/>
    <property type="molecule type" value="Genomic_DNA"/>
</dbReference>
<dbReference type="EMBL" id="Y12504">
    <property type="protein sequence ID" value="CAA73106.1"/>
    <property type="molecule type" value="Genomic_DNA"/>
</dbReference>
<dbReference type="PIR" id="T43723">
    <property type="entry name" value="T43723"/>
</dbReference>
<dbReference type="SMR" id="P59769"/>
<dbReference type="GO" id="GO:0005788">
    <property type="term" value="C:endoplasmic reticulum lumen"/>
    <property type="evidence" value="ECO:0000303"/>
    <property type="project" value="UniProtKB"/>
</dbReference>
<dbReference type="GO" id="GO:0005524">
    <property type="term" value="F:ATP binding"/>
    <property type="evidence" value="ECO:0000303"/>
    <property type="project" value="UniProtKB"/>
</dbReference>
<dbReference type="GO" id="GO:0016887">
    <property type="term" value="F:ATP hydrolysis activity"/>
    <property type="evidence" value="ECO:0007669"/>
    <property type="project" value="RHEA"/>
</dbReference>
<dbReference type="GO" id="GO:0140662">
    <property type="term" value="F:ATP-dependent protein folding chaperone"/>
    <property type="evidence" value="ECO:0007669"/>
    <property type="project" value="InterPro"/>
</dbReference>
<dbReference type="GO" id="GO:0006986">
    <property type="term" value="P:response to unfolded protein"/>
    <property type="evidence" value="ECO:0000314"/>
    <property type="project" value="UniProtKB"/>
</dbReference>
<dbReference type="CDD" id="cd10241">
    <property type="entry name" value="ASKHA_NBD_HSP70_BiP"/>
    <property type="match status" value="1"/>
</dbReference>
<dbReference type="FunFam" id="1.20.1270.10:FF:000009">
    <property type="entry name" value="DnaK-type molecular chaperone BiP"/>
    <property type="match status" value="1"/>
</dbReference>
<dbReference type="FunFam" id="3.90.640.10:FF:000153">
    <property type="entry name" value="Endoplasmic reticulum chaperone BiP"/>
    <property type="match status" value="1"/>
</dbReference>
<dbReference type="FunFam" id="2.60.34.10:FF:000002">
    <property type="entry name" value="Heat shock 70 kDa"/>
    <property type="match status" value="1"/>
</dbReference>
<dbReference type="FunFam" id="3.30.420.40:FF:000172">
    <property type="entry name" value="Heat shock 70 kDa protein"/>
    <property type="match status" value="1"/>
</dbReference>
<dbReference type="FunFam" id="3.30.30.30:FF:000001">
    <property type="entry name" value="heat shock 70 kDa protein-like"/>
    <property type="match status" value="1"/>
</dbReference>
<dbReference type="FunFam" id="3.30.420.40:FF:000026">
    <property type="entry name" value="Heat shock protein 70"/>
    <property type="match status" value="1"/>
</dbReference>
<dbReference type="Gene3D" id="1.20.1270.10">
    <property type="match status" value="1"/>
</dbReference>
<dbReference type="Gene3D" id="3.30.30.30">
    <property type="match status" value="1"/>
</dbReference>
<dbReference type="Gene3D" id="3.30.420.40">
    <property type="match status" value="2"/>
</dbReference>
<dbReference type="Gene3D" id="3.90.640.10">
    <property type="entry name" value="Actin, Chain A, domain 4"/>
    <property type="match status" value="1"/>
</dbReference>
<dbReference type="Gene3D" id="2.60.34.10">
    <property type="entry name" value="Substrate Binding Domain Of DNAk, Chain A, domain 1"/>
    <property type="match status" value="1"/>
</dbReference>
<dbReference type="InterPro" id="IPR043129">
    <property type="entry name" value="ATPase_NBD"/>
</dbReference>
<dbReference type="InterPro" id="IPR042050">
    <property type="entry name" value="BIP_NBD"/>
</dbReference>
<dbReference type="InterPro" id="IPR018181">
    <property type="entry name" value="Heat_shock_70_CS"/>
</dbReference>
<dbReference type="InterPro" id="IPR029048">
    <property type="entry name" value="HSP70_C_sf"/>
</dbReference>
<dbReference type="InterPro" id="IPR029047">
    <property type="entry name" value="HSP70_peptide-bd_sf"/>
</dbReference>
<dbReference type="InterPro" id="IPR013126">
    <property type="entry name" value="Hsp_70_fam"/>
</dbReference>
<dbReference type="NCBIfam" id="NF001413">
    <property type="entry name" value="PRK00290.1"/>
    <property type="match status" value="1"/>
</dbReference>
<dbReference type="PANTHER" id="PTHR19375">
    <property type="entry name" value="HEAT SHOCK PROTEIN 70KDA"/>
    <property type="match status" value="1"/>
</dbReference>
<dbReference type="Pfam" id="PF00012">
    <property type="entry name" value="HSP70"/>
    <property type="match status" value="1"/>
</dbReference>
<dbReference type="PRINTS" id="PR00301">
    <property type="entry name" value="HEATSHOCK70"/>
</dbReference>
<dbReference type="SUPFAM" id="SSF53067">
    <property type="entry name" value="Actin-like ATPase domain"/>
    <property type="match status" value="2"/>
</dbReference>
<dbReference type="SUPFAM" id="SSF100934">
    <property type="entry name" value="Heat shock protein 70kD (HSP70), C-terminal subdomain"/>
    <property type="match status" value="1"/>
</dbReference>
<dbReference type="SUPFAM" id="SSF100920">
    <property type="entry name" value="Heat shock protein 70kD (HSP70), peptide-binding domain"/>
    <property type="match status" value="1"/>
</dbReference>
<dbReference type="PROSITE" id="PS00014">
    <property type="entry name" value="ER_TARGET"/>
    <property type="match status" value="1"/>
</dbReference>
<dbReference type="PROSITE" id="PS00297">
    <property type="entry name" value="HSP70_1"/>
    <property type="match status" value="1"/>
</dbReference>
<dbReference type="PROSITE" id="PS00329">
    <property type="entry name" value="HSP70_2"/>
    <property type="match status" value="1"/>
</dbReference>
<dbReference type="PROSITE" id="PS01036">
    <property type="entry name" value="HSP70_3"/>
    <property type="match status" value="1"/>
</dbReference>
<sequence length="672" mass="73459">MARISHQGAAKPFTAWTTIFYLLLVFIAPLAFFGTAHAQDETSPQESYGTVIGIDLGTTYSCVGVMQNGKVEILVNDQGNRITPSYVAFTDEERLVGDAAKNQYAANPRRTIFDIKRLIGRKFDDKDVQKDAKHFPYKVVNKDGKPHVKVDVNQTPKTLTPEEVSAMVLGKMKEIAEGYLGKKVTHAVVTVPAYFNDAQRQATKDAGTIAGLNVLRVVNEPTAAAIAYGLDKTGDERQVIVYDLGGGTFDVSLLSIDNGVFEVLATAGDTHLGGEDFDQRVMDHFVKLYNKKNNVDVTKDLKAMGKLKREVEKAKRTLSSQMSTRIEIEAFHNGEDFSETLTRAKFEELNMDLFKKTLKPVEQVLKDAKVKKSEVDDIVLVGGSTRIPKVQALLEEFFGGKKASKGINPDEAVAFGAAVQGGVLSGEEGTGDVVLMDVNPLTLGIETTGGVMTKLIPRNTVIPTRKSQIFSTAADNQPTVLIQVYEGERSLTKDNNLLGKFELTGIPPAPRGVPQIEVSFDLDANGILKVHASDKGTGKAESITITNDKGRLSQEEIDRMVAEAEEFAEEDKAIKAKIEARNTLENYAFSLKNQVNDENGLGGQIDEDDKQTILDAVKEVTEWLEDNAATATTEDFEEQKEQLSNVAYPITSKLYGSAPADEDDEPSGHDEL</sequence>
<proteinExistence type="evidence at transcript level"/>
<feature type="signal peptide" evidence="3">
    <location>
        <begin position="1"/>
        <end position="38"/>
    </location>
</feature>
<feature type="chain" id="PRO_0000013577" description="Endoplasmic reticulum chaperone BiP">
    <location>
        <begin position="39"/>
        <end position="672"/>
    </location>
</feature>
<feature type="region of interest" description="Nucleotide-binding (NBD)" evidence="1">
    <location>
        <begin position="145"/>
        <end position="299"/>
    </location>
</feature>
<feature type="region of interest" description="Substrate-binding (SBD)" evidence="1">
    <location>
        <begin position="419"/>
        <end position="519"/>
    </location>
</feature>
<feature type="short sequence motif" description="Prevents secretion from ER" evidence="4">
    <location>
        <begin position="669"/>
        <end position="672"/>
    </location>
</feature>
<feature type="binding site" evidence="1">
    <location>
        <begin position="57"/>
        <end position="60"/>
    </location>
    <ligand>
        <name>ATP</name>
        <dbReference type="ChEBI" id="CHEBI:30616"/>
    </ligand>
</feature>
<feature type="binding site" evidence="1">
    <location>
        <position position="116"/>
    </location>
    <ligand>
        <name>ATP</name>
        <dbReference type="ChEBI" id="CHEBI:30616"/>
    </ligand>
</feature>
<feature type="binding site" evidence="1">
    <location>
        <begin position="246"/>
        <end position="248"/>
    </location>
    <ligand>
        <name>ATP</name>
        <dbReference type="ChEBI" id="CHEBI:30616"/>
    </ligand>
</feature>
<feature type="binding site" evidence="1">
    <location>
        <begin position="312"/>
        <end position="319"/>
    </location>
    <ligand>
        <name>ATP</name>
        <dbReference type="ChEBI" id="CHEBI:30616"/>
    </ligand>
</feature>
<feature type="binding site" evidence="1">
    <location>
        <begin position="383"/>
        <end position="386"/>
    </location>
    <ligand>
        <name>ATP</name>
        <dbReference type="ChEBI" id="CHEBI:30616"/>
    </ligand>
</feature>
<feature type="sequence conflict" description="In Ref. 2; CAA73106." evidence="6" ref="2">
    <original>R</original>
    <variation>G</variation>
    <location>
        <position position="316"/>
    </location>
</feature>
<reference key="1">
    <citation type="journal article" date="1997" name="Gene">
        <title>The ER chaperone encoding bipA gene of black Aspergilli is induced by heat shock and unfolded proteins.</title>
        <authorList>
            <person name="van Gemeren I.A."/>
            <person name="Punt P.J."/>
            <person name="Drint-Kuyvenhoven A."/>
            <person name="Broekhuijsen M.P."/>
            <person name="van't Hoog A."/>
            <person name="Beijersbergen A."/>
            <person name="Verrips C.T."/>
            <person name="van den Hondel C.A.M.J.J."/>
        </authorList>
    </citation>
    <scope>NUCLEOTIDE SEQUENCE [GENOMIC DNA]</scope>
    <scope>INDUCTION</scope>
    <source>
        <strain>ATCC 11358 / K-6615 / CBS 115.52</strain>
    </source>
</reference>
<reference key="2">
    <citation type="journal article" date="1997" name="Curr. Genet.">
        <title>Characterization of the bip gene of Aspergillus awamori encoding a protein with an HDEL retention signal homologous to the mammalian BiP involved in polypeptide secretion.</title>
        <authorList>
            <person name="Hijarrubia M.J."/>
            <person name="Casqueiro J."/>
            <person name="Gutierrez S."/>
            <person name="Fernandez F.J."/>
            <person name="Martin J.F."/>
        </authorList>
    </citation>
    <scope>NUCLEOTIDE SEQUENCE [GENOMIC DNA]</scope>
    <source>
        <strain>ATCC 22342 / NRRL 3112</strain>
    </source>
</reference>
<gene>
    <name type="primary">bipA</name>
    <name type="synonym">bip</name>
</gene>
<comment type="function">
    <text evidence="2">Probably plays a role in facilitating the assembly of multimeric protein complexes inside the ER. Is required for secretory polypeptide translocation. May physically associate with SEC63 protein in the endoplasmic reticulum and this interaction may be regulated by ATP hydrolysis.</text>
</comment>
<comment type="catalytic activity">
    <reaction evidence="1">
        <text>ATP + H2O = ADP + phosphate + H(+)</text>
        <dbReference type="Rhea" id="RHEA:13065"/>
        <dbReference type="ChEBI" id="CHEBI:15377"/>
        <dbReference type="ChEBI" id="CHEBI:15378"/>
        <dbReference type="ChEBI" id="CHEBI:30616"/>
        <dbReference type="ChEBI" id="CHEBI:43474"/>
        <dbReference type="ChEBI" id="CHEBI:456216"/>
        <dbReference type="EC" id="3.6.4.10"/>
    </reaction>
</comment>
<comment type="activity regulation">
    <text evidence="1">The chaperone activity is regulated by ATP-induced allosteric coupling of the nucleotide-binding (NBD) and substrate-binding (SBD) domains. In the ADP-bound and nucleotide-free (apo) states, the two domains have little interaction. In contrast, in the ATP-bound state the two domains are tightly coupled, which results in drastically accelerated kinetics in both binding and release of polypeptide substrates. J domain-containing co-chaperones stimulate the ATPase activity and are required for efficient substrate recognition.</text>
</comment>
<comment type="subcellular location">
    <subcellularLocation>
        <location evidence="2 4">Endoplasmic reticulum lumen</location>
    </subcellularLocation>
</comment>
<comment type="induction">
    <text evidence="5">By heat shock and tunicamycin. Not induced by carbon source starvation.</text>
</comment>
<comment type="similarity">
    <text evidence="6">Belongs to the heat shock protein 70 family.</text>
</comment>
<accession>P59769</accession>
<accession>O13280</accession>
<accession>O14453</accession>
<name>BIP_ASPAW</name>
<evidence type="ECO:0000250" key="1">
    <source>
        <dbReference type="UniProtKB" id="P11021"/>
    </source>
</evidence>
<evidence type="ECO:0000250" key="2">
    <source>
        <dbReference type="UniProtKB" id="P16474"/>
    </source>
</evidence>
<evidence type="ECO:0000255" key="3"/>
<evidence type="ECO:0000255" key="4">
    <source>
        <dbReference type="PROSITE-ProRule" id="PRU10138"/>
    </source>
</evidence>
<evidence type="ECO:0000269" key="5">
    <source>
    </source>
</evidence>
<evidence type="ECO:0000305" key="6"/>
<keyword id="KW-0067">ATP-binding</keyword>
<keyword id="KW-0143">Chaperone</keyword>
<keyword id="KW-0256">Endoplasmic reticulum</keyword>
<keyword id="KW-0378">Hydrolase</keyword>
<keyword id="KW-0547">Nucleotide-binding</keyword>
<keyword id="KW-0732">Signal</keyword>
<keyword id="KW-0346">Stress response</keyword>
<organism>
    <name type="scientific">Aspergillus awamori</name>
    <name type="common">Black koji mold</name>
    <dbReference type="NCBI Taxonomy" id="105351"/>
    <lineage>
        <taxon>Eukaryota</taxon>
        <taxon>Fungi</taxon>
        <taxon>Dikarya</taxon>
        <taxon>Ascomycota</taxon>
        <taxon>Pezizomycotina</taxon>
        <taxon>Eurotiomycetes</taxon>
        <taxon>Eurotiomycetidae</taxon>
        <taxon>Eurotiales</taxon>
        <taxon>Aspergillaceae</taxon>
        <taxon>Aspergillus</taxon>
    </lineage>
</organism>
<protein>
    <recommendedName>
        <fullName evidence="6">Endoplasmic reticulum chaperone BiP</fullName>
        <ecNumber evidence="1">3.6.4.10</ecNumber>
    </recommendedName>
    <alternativeName>
        <fullName evidence="6">Immunoglobulin heavy chain-binding protein homolog</fullName>
        <shortName evidence="6">BiP</shortName>
    </alternativeName>
</protein>